<comment type="function">
    <text evidence="1">Cytochrome c oxidase subunit which plays a role in assembly of respiratory supercomplexes.</text>
</comment>
<comment type="subunit">
    <text evidence="1">Associates with the respiratory chain complex III/complex IV supercomplex.</text>
</comment>
<comment type="subcellular location">
    <subcellularLocation>
        <location evidence="2">Mitochondrion membrane</location>
        <topology evidence="2">Multi-pass membrane protein</topology>
    </subcellularLocation>
</comment>
<comment type="similarity">
    <text evidence="4">Belongs to the RCF1 family.</text>
</comment>
<reference key="1">
    <citation type="journal article" date="2011" name="Science">
        <title>Comparative functional genomics of the fission yeasts.</title>
        <authorList>
            <person name="Rhind N."/>
            <person name="Chen Z."/>
            <person name="Yassour M."/>
            <person name="Thompson D.A."/>
            <person name="Haas B.J."/>
            <person name="Habib N."/>
            <person name="Wapinski I."/>
            <person name="Roy S."/>
            <person name="Lin M.F."/>
            <person name="Heiman D.I."/>
            <person name="Young S.K."/>
            <person name="Furuya K."/>
            <person name="Guo Y."/>
            <person name="Pidoux A."/>
            <person name="Chen H.M."/>
            <person name="Robbertse B."/>
            <person name="Goldberg J.M."/>
            <person name="Aoki K."/>
            <person name="Bayne E.H."/>
            <person name="Berlin A.M."/>
            <person name="Desjardins C.A."/>
            <person name="Dobbs E."/>
            <person name="Dukaj L."/>
            <person name="Fan L."/>
            <person name="FitzGerald M.G."/>
            <person name="French C."/>
            <person name="Gujja S."/>
            <person name="Hansen K."/>
            <person name="Keifenheim D."/>
            <person name="Levin J.Z."/>
            <person name="Mosher R.A."/>
            <person name="Mueller C.A."/>
            <person name="Pfiffner J."/>
            <person name="Priest M."/>
            <person name="Russ C."/>
            <person name="Smialowska A."/>
            <person name="Swoboda P."/>
            <person name="Sykes S.M."/>
            <person name="Vaughn M."/>
            <person name="Vengrova S."/>
            <person name="Yoder R."/>
            <person name="Zeng Q."/>
            <person name="Allshire R."/>
            <person name="Baulcombe D."/>
            <person name="Birren B.W."/>
            <person name="Brown W."/>
            <person name="Ekwall K."/>
            <person name="Kellis M."/>
            <person name="Leatherwood J."/>
            <person name="Levin H."/>
            <person name="Margalit H."/>
            <person name="Martienssen R."/>
            <person name="Nieduszynski C.A."/>
            <person name="Spatafora J.W."/>
            <person name="Friedman N."/>
            <person name="Dalgaard J.Z."/>
            <person name="Baumann P."/>
            <person name="Niki H."/>
            <person name="Regev A."/>
            <person name="Nusbaum C."/>
        </authorList>
    </citation>
    <scope>NUCLEOTIDE SEQUENCE [LARGE SCALE GENOMIC DNA]</scope>
    <source>
        <strain>yFS275 / FY16936</strain>
    </source>
</reference>
<protein>
    <recommendedName>
        <fullName>Respiratory supercomplex factor 1, mitochondrial</fullName>
    </recommendedName>
</protein>
<dbReference type="EMBL" id="KE651167">
    <property type="protein sequence ID" value="EEB07853.1"/>
    <property type="molecule type" value="Genomic_DNA"/>
</dbReference>
<dbReference type="RefSeq" id="XP_002174146.1">
    <property type="nucleotide sequence ID" value="XM_002174110.1"/>
</dbReference>
<dbReference type="SMR" id="B6K2Z6"/>
<dbReference type="STRING" id="402676.B6K2Z6"/>
<dbReference type="EnsemblFungi" id="EEB07853">
    <property type="protein sequence ID" value="EEB07853"/>
    <property type="gene ID" value="SJAG_02975"/>
</dbReference>
<dbReference type="GeneID" id="7051747"/>
<dbReference type="JaponicusDB" id="SJAG_02975">
    <property type="gene designation" value="rcf1"/>
</dbReference>
<dbReference type="VEuPathDB" id="FungiDB:SJAG_02975"/>
<dbReference type="eggNOG" id="KOG4431">
    <property type="taxonomic scope" value="Eukaryota"/>
</dbReference>
<dbReference type="HOGENOM" id="CLU_2224735_0_0_1"/>
<dbReference type="OrthoDB" id="6604018at2759"/>
<dbReference type="Proteomes" id="UP000001744">
    <property type="component" value="Unassembled WGS sequence"/>
</dbReference>
<dbReference type="GO" id="GO:0031966">
    <property type="term" value="C:mitochondrial membrane"/>
    <property type="evidence" value="ECO:0007669"/>
    <property type="project" value="UniProtKB-SubCell"/>
</dbReference>
<dbReference type="Gene3D" id="6.10.140.1320">
    <property type="match status" value="1"/>
</dbReference>
<dbReference type="InterPro" id="IPR007667">
    <property type="entry name" value="Hypoxia_induced_domain"/>
</dbReference>
<dbReference type="InterPro" id="IPR050355">
    <property type="entry name" value="RCF1"/>
</dbReference>
<dbReference type="PANTHER" id="PTHR12297:SF3">
    <property type="entry name" value="HIG1 DOMAIN FAMILY MEMBER 1A"/>
    <property type="match status" value="1"/>
</dbReference>
<dbReference type="PANTHER" id="PTHR12297">
    <property type="entry name" value="HYPOXIA-INDUCBILE GENE 1 HIG1 -RELATED"/>
    <property type="match status" value="1"/>
</dbReference>
<dbReference type="Pfam" id="PF04588">
    <property type="entry name" value="HIG_1_N"/>
    <property type="match status" value="1"/>
</dbReference>
<dbReference type="PROSITE" id="PS51503">
    <property type="entry name" value="HIG1"/>
    <property type="match status" value="1"/>
</dbReference>
<accession>B6K2Z6</accession>
<proteinExistence type="inferred from homology"/>
<sequence length="106" mass="11808">MAKTSPVVPPIKLSEPTESGNDTTETSGRLKHLFRDQPLIPIGCAATVGAFLFATRAIRRGDSMRANRFFRYRVLAQAATVLAIVGGVFMERKMKQEKRMEQITPK</sequence>
<keyword id="KW-0472">Membrane</keyword>
<keyword id="KW-0496">Mitochondrion</keyword>
<keyword id="KW-1185">Reference proteome</keyword>
<keyword id="KW-0812">Transmembrane</keyword>
<keyword id="KW-1133">Transmembrane helix</keyword>
<evidence type="ECO:0000250" key="1"/>
<evidence type="ECO:0000255" key="2">
    <source>
        <dbReference type="PROSITE-ProRule" id="PRU00836"/>
    </source>
</evidence>
<evidence type="ECO:0000256" key="3">
    <source>
        <dbReference type="SAM" id="MobiDB-lite"/>
    </source>
</evidence>
<evidence type="ECO:0000305" key="4"/>
<gene>
    <name type="primary">rcf1</name>
    <name type="synonym">aim31</name>
    <name type="ORF">SJAG_02975</name>
</gene>
<name>RCF1_SCHJY</name>
<organism>
    <name type="scientific">Schizosaccharomyces japonicus (strain yFS275 / FY16936)</name>
    <name type="common">Fission yeast</name>
    <dbReference type="NCBI Taxonomy" id="402676"/>
    <lineage>
        <taxon>Eukaryota</taxon>
        <taxon>Fungi</taxon>
        <taxon>Dikarya</taxon>
        <taxon>Ascomycota</taxon>
        <taxon>Taphrinomycotina</taxon>
        <taxon>Schizosaccharomycetes</taxon>
        <taxon>Schizosaccharomycetales</taxon>
        <taxon>Schizosaccharomycetaceae</taxon>
        <taxon>Schizosaccharomyces</taxon>
    </lineage>
</organism>
<feature type="chain" id="PRO_0000399658" description="Respiratory supercomplex factor 1, mitochondrial">
    <location>
        <begin position="1"/>
        <end position="106"/>
    </location>
</feature>
<feature type="transmembrane region" description="Helical" evidence="2">
    <location>
        <begin position="39"/>
        <end position="58"/>
    </location>
</feature>
<feature type="transmembrane region" description="Helical" evidence="2">
    <location>
        <begin position="73"/>
        <end position="90"/>
    </location>
</feature>
<feature type="domain" description="HIG1" evidence="2">
    <location>
        <begin position="9"/>
        <end position="102"/>
    </location>
</feature>
<feature type="region of interest" description="Disordered" evidence="3">
    <location>
        <begin position="1"/>
        <end position="28"/>
    </location>
</feature>
<feature type="compositionally biased region" description="Polar residues" evidence="3">
    <location>
        <begin position="16"/>
        <end position="27"/>
    </location>
</feature>